<keyword id="KW-0150">Chloroplast</keyword>
<keyword id="KW-0934">Plastid</keyword>
<keyword id="KW-0687">Ribonucleoprotein</keyword>
<keyword id="KW-0689">Ribosomal protein</keyword>
<keyword id="KW-0694">RNA-binding</keyword>
<keyword id="KW-0699">rRNA-binding</keyword>
<comment type="function">
    <text evidence="1">One of the primary rRNA binding proteins, it binds directly to 16S rRNA where it nucleates assembly of the body of the 30S subunit.</text>
</comment>
<comment type="function">
    <text evidence="1">With S5 and S12 plays an important role in translational accuracy.</text>
</comment>
<comment type="subunit">
    <text evidence="1">Part of the 30S ribosomal subunit. Contacts protein S5. The interaction surface between S4 and S5 is involved in control of translational fidelity (By similarity).</text>
</comment>
<comment type="subcellular location">
    <subcellularLocation>
        <location>Plastid</location>
        <location>Chloroplast</location>
    </subcellularLocation>
</comment>
<comment type="similarity">
    <text evidence="2">Belongs to the universal ribosomal protein uS4 family.</text>
</comment>
<evidence type="ECO:0000250" key="1"/>
<evidence type="ECO:0000305" key="2"/>
<accession>Q6B8N4</accession>
<proteinExistence type="inferred from homology"/>
<protein>
    <recommendedName>
        <fullName evidence="2">Small ribosomal subunit protein uS4c</fullName>
    </recommendedName>
    <alternativeName>
        <fullName>30S ribosomal protein S4, chloroplastic</fullName>
    </alternativeName>
</protein>
<feature type="chain" id="PRO_0000132594" description="Small ribosomal subunit protein uS4c">
    <location>
        <begin position="1"/>
        <end position="201"/>
    </location>
</feature>
<feature type="domain" description="S4 RNA-binding">
    <location>
        <begin position="90"/>
        <end position="153"/>
    </location>
</feature>
<name>RR4_GRATL</name>
<reference key="1">
    <citation type="journal article" date="2004" name="J. Mol. Evol.">
        <title>Comparative analysis of the complete plastid genome sequence of the red alga Gracilaria tenuistipitata var. liui provides insights into the evolution of rhodoplasts and their relationship to other plastids.</title>
        <authorList>
            <person name="Hagopian J.C."/>
            <person name="Reis M."/>
            <person name="Kitajima J.P."/>
            <person name="Bhattacharya D."/>
            <person name="de Oliveira M.C."/>
        </authorList>
    </citation>
    <scope>NUCLEOTIDE SEQUENCE [LARGE SCALE GENOMIC DNA]</scope>
</reference>
<geneLocation type="chloroplast"/>
<gene>
    <name type="primary">rps4</name>
    <name type="ordered locus">Grc000170</name>
</gene>
<sequence>MSRYRGPRLRISRRLGDLPGLTRKISKKLSPAGEHGQQLRKPSEYSLRLEEKQKLRFNYGLSEKQLSKYIKIAKKVTGSTGLILLQILEMRLDNVIFRLGLSPTLPAARQLVNHGHILINKQKVSICSYQCKPGDIIDVQAKDSSQNLVKRYLSFPTLVGIPNHLELNTKTLNAKINAIVERESVALQMNELLVVEYYSRK</sequence>
<dbReference type="EMBL" id="AY673996">
    <property type="protein sequence ID" value="AAT79751.1"/>
    <property type="molecule type" value="Genomic_DNA"/>
</dbReference>
<dbReference type="RefSeq" id="YP_063676.1">
    <property type="nucleotide sequence ID" value="NC_006137.1"/>
</dbReference>
<dbReference type="SMR" id="Q6B8N4"/>
<dbReference type="GeneID" id="2944119"/>
<dbReference type="GO" id="GO:0009507">
    <property type="term" value="C:chloroplast"/>
    <property type="evidence" value="ECO:0007669"/>
    <property type="project" value="UniProtKB-SubCell"/>
</dbReference>
<dbReference type="GO" id="GO:0015935">
    <property type="term" value="C:small ribosomal subunit"/>
    <property type="evidence" value="ECO:0007669"/>
    <property type="project" value="InterPro"/>
</dbReference>
<dbReference type="GO" id="GO:0019843">
    <property type="term" value="F:rRNA binding"/>
    <property type="evidence" value="ECO:0007669"/>
    <property type="project" value="UniProtKB-UniRule"/>
</dbReference>
<dbReference type="GO" id="GO:0003735">
    <property type="term" value="F:structural constituent of ribosome"/>
    <property type="evidence" value="ECO:0007669"/>
    <property type="project" value="InterPro"/>
</dbReference>
<dbReference type="GO" id="GO:0042274">
    <property type="term" value="P:ribosomal small subunit biogenesis"/>
    <property type="evidence" value="ECO:0007669"/>
    <property type="project" value="TreeGrafter"/>
</dbReference>
<dbReference type="GO" id="GO:0006412">
    <property type="term" value="P:translation"/>
    <property type="evidence" value="ECO:0007669"/>
    <property type="project" value="UniProtKB-UniRule"/>
</dbReference>
<dbReference type="CDD" id="cd00165">
    <property type="entry name" value="S4"/>
    <property type="match status" value="1"/>
</dbReference>
<dbReference type="FunFam" id="3.10.290.10:FF:000001">
    <property type="entry name" value="30S ribosomal protein S4"/>
    <property type="match status" value="1"/>
</dbReference>
<dbReference type="FunFam" id="1.10.1050.10:FF:000002">
    <property type="entry name" value="30S ribosomal protein S4, chloroplastic"/>
    <property type="match status" value="1"/>
</dbReference>
<dbReference type="Gene3D" id="1.10.1050.10">
    <property type="entry name" value="Ribosomal Protein S4 Delta 41, Chain A, domain 1"/>
    <property type="match status" value="1"/>
</dbReference>
<dbReference type="Gene3D" id="3.10.290.10">
    <property type="entry name" value="RNA-binding S4 domain"/>
    <property type="match status" value="1"/>
</dbReference>
<dbReference type="HAMAP" id="MF_01306_B">
    <property type="entry name" value="Ribosomal_uS4_B"/>
    <property type="match status" value="1"/>
</dbReference>
<dbReference type="InterPro" id="IPR022801">
    <property type="entry name" value="Ribosomal_uS4"/>
</dbReference>
<dbReference type="InterPro" id="IPR005709">
    <property type="entry name" value="Ribosomal_uS4_bac-type"/>
</dbReference>
<dbReference type="InterPro" id="IPR018079">
    <property type="entry name" value="Ribosomal_uS4_CS"/>
</dbReference>
<dbReference type="InterPro" id="IPR001912">
    <property type="entry name" value="Ribosomal_uS4_N"/>
</dbReference>
<dbReference type="InterPro" id="IPR002942">
    <property type="entry name" value="S4_RNA-bd"/>
</dbReference>
<dbReference type="InterPro" id="IPR036986">
    <property type="entry name" value="S4_RNA-bd_sf"/>
</dbReference>
<dbReference type="NCBIfam" id="NF003717">
    <property type="entry name" value="PRK05327.1"/>
    <property type="match status" value="1"/>
</dbReference>
<dbReference type="NCBIfam" id="TIGR01017">
    <property type="entry name" value="rpsD_bact"/>
    <property type="match status" value="1"/>
</dbReference>
<dbReference type="PANTHER" id="PTHR11831">
    <property type="entry name" value="30S 40S RIBOSOMAL PROTEIN"/>
    <property type="match status" value="1"/>
</dbReference>
<dbReference type="PANTHER" id="PTHR11831:SF4">
    <property type="entry name" value="SMALL RIBOSOMAL SUBUNIT PROTEIN US4M"/>
    <property type="match status" value="1"/>
</dbReference>
<dbReference type="Pfam" id="PF00163">
    <property type="entry name" value="Ribosomal_S4"/>
    <property type="match status" value="1"/>
</dbReference>
<dbReference type="Pfam" id="PF01479">
    <property type="entry name" value="S4"/>
    <property type="match status" value="1"/>
</dbReference>
<dbReference type="SMART" id="SM01390">
    <property type="entry name" value="Ribosomal_S4"/>
    <property type="match status" value="1"/>
</dbReference>
<dbReference type="SMART" id="SM00363">
    <property type="entry name" value="S4"/>
    <property type="match status" value="1"/>
</dbReference>
<dbReference type="SUPFAM" id="SSF55174">
    <property type="entry name" value="Alpha-L RNA-binding motif"/>
    <property type="match status" value="1"/>
</dbReference>
<dbReference type="PROSITE" id="PS00632">
    <property type="entry name" value="RIBOSOMAL_S4"/>
    <property type="match status" value="1"/>
</dbReference>
<dbReference type="PROSITE" id="PS50889">
    <property type="entry name" value="S4"/>
    <property type="match status" value="1"/>
</dbReference>
<organism>
    <name type="scientific">Gracilaria tenuistipitata var. liui</name>
    <name type="common">Red alga</name>
    <dbReference type="NCBI Taxonomy" id="285951"/>
    <lineage>
        <taxon>Eukaryota</taxon>
        <taxon>Rhodophyta</taxon>
        <taxon>Florideophyceae</taxon>
        <taxon>Rhodymeniophycidae</taxon>
        <taxon>Gracilariales</taxon>
        <taxon>Gracilariaceae</taxon>
        <taxon>Gracilaria</taxon>
        <taxon>Gracilaria tenuistipitata</taxon>
    </lineage>
</organism>